<protein>
    <recommendedName>
        <fullName evidence="1">GTPase Era</fullName>
    </recommendedName>
</protein>
<accession>B5Z6P0</accession>
<dbReference type="EMBL" id="CP001173">
    <property type="protein sequence ID" value="ACI27239.1"/>
    <property type="molecule type" value="Genomic_DNA"/>
</dbReference>
<dbReference type="RefSeq" id="WP_000849791.1">
    <property type="nucleotide sequence ID" value="NC_011333.1"/>
</dbReference>
<dbReference type="SMR" id="B5Z6P0"/>
<dbReference type="KEGG" id="hpg:HPG27_476"/>
<dbReference type="HOGENOM" id="CLU_038009_1_0_7"/>
<dbReference type="Proteomes" id="UP000001735">
    <property type="component" value="Chromosome"/>
</dbReference>
<dbReference type="GO" id="GO:0005829">
    <property type="term" value="C:cytosol"/>
    <property type="evidence" value="ECO:0007669"/>
    <property type="project" value="TreeGrafter"/>
</dbReference>
<dbReference type="GO" id="GO:0005886">
    <property type="term" value="C:plasma membrane"/>
    <property type="evidence" value="ECO:0007669"/>
    <property type="project" value="UniProtKB-SubCell"/>
</dbReference>
<dbReference type="GO" id="GO:0005525">
    <property type="term" value="F:GTP binding"/>
    <property type="evidence" value="ECO:0007669"/>
    <property type="project" value="UniProtKB-UniRule"/>
</dbReference>
<dbReference type="GO" id="GO:0003924">
    <property type="term" value="F:GTPase activity"/>
    <property type="evidence" value="ECO:0007669"/>
    <property type="project" value="UniProtKB-UniRule"/>
</dbReference>
<dbReference type="GO" id="GO:0043024">
    <property type="term" value="F:ribosomal small subunit binding"/>
    <property type="evidence" value="ECO:0007669"/>
    <property type="project" value="TreeGrafter"/>
</dbReference>
<dbReference type="GO" id="GO:0070181">
    <property type="term" value="F:small ribosomal subunit rRNA binding"/>
    <property type="evidence" value="ECO:0007669"/>
    <property type="project" value="UniProtKB-UniRule"/>
</dbReference>
<dbReference type="GO" id="GO:0000028">
    <property type="term" value="P:ribosomal small subunit assembly"/>
    <property type="evidence" value="ECO:0007669"/>
    <property type="project" value="TreeGrafter"/>
</dbReference>
<dbReference type="CDD" id="cd04163">
    <property type="entry name" value="Era"/>
    <property type="match status" value="1"/>
</dbReference>
<dbReference type="CDD" id="cd22534">
    <property type="entry name" value="KH-II_Era"/>
    <property type="match status" value="1"/>
</dbReference>
<dbReference type="FunFam" id="3.30.300.20:FF:000034">
    <property type="entry name" value="GTPase Era"/>
    <property type="match status" value="1"/>
</dbReference>
<dbReference type="Gene3D" id="3.30.300.20">
    <property type="match status" value="1"/>
</dbReference>
<dbReference type="Gene3D" id="3.40.50.300">
    <property type="entry name" value="P-loop containing nucleotide triphosphate hydrolases"/>
    <property type="match status" value="1"/>
</dbReference>
<dbReference type="HAMAP" id="MF_00367">
    <property type="entry name" value="GTPase_Era"/>
    <property type="match status" value="1"/>
</dbReference>
<dbReference type="InterPro" id="IPR030388">
    <property type="entry name" value="G_ERA_dom"/>
</dbReference>
<dbReference type="InterPro" id="IPR006073">
    <property type="entry name" value="GTP-bd"/>
</dbReference>
<dbReference type="InterPro" id="IPR005662">
    <property type="entry name" value="GTPase_Era-like"/>
</dbReference>
<dbReference type="InterPro" id="IPR015946">
    <property type="entry name" value="KH_dom-like_a/b"/>
</dbReference>
<dbReference type="InterPro" id="IPR004044">
    <property type="entry name" value="KH_dom_type_2"/>
</dbReference>
<dbReference type="InterPro" id="IPR009019">
    <property type="entry name" value="KH_sf_prok-type"/>
</dbReference>
<dbReference type="InterPro" id="IPR027417">
    <property type="entry name" value="P-loop_NTPase"/>
</dbReference>
<dbReference type="InterPro" id="IPR005225">
    <property type="entry name" value="Small_GTP-bd"/>
</dbReference>
<dbReference type="NCBIfam" id="TIGR00436">
    <property type="entry name" value="era"/>
    <property type="match status" value="1"/>
</dbReference>
<dbReference type="NCBIfam" id="NF000908">
    <property type="entry name" value="PRK00089.1"/>
    <property type="match status" value="1"/>
</dbReference>
<dbReference type="NCBIfam" id="TIGR00231">
    <property type="entry name" value="small_GTP"/>
    <property type="match status" value="1"/>
</dbReference>
<dbReference type="PANTHER" id="PTHR42698">
    <property type="entry name" value="GTPASE ERA"/>
    <property type="match status" value="1"/>
</dbReference>
<dbReference type="PANTHER" id="PTHR42698:SF1">
    <property type="entry name" value="GTPASE ERA, MITOCHONDRIAL"/>
    <property type="match status" value="1"/>
</dbReference>
<dbReference type="Pfam" id="PF07650">
    <property type="entry name" value="KH_2"/>
    <property type="match status" value="1"/>
</dbReference>
<dbReference type="Pfam" id="PF01926">
    <property type="entry name" value="MMR_HSR1"/>
    <property type="match status" value="1"/>
</dbReference>
<dbReference type="SUPFAM" id="SSF52540">
    <property type="entry name" value="P-loop containing nucleoside triphosphate hydrolases"/>
    <property type="match status" value="1"/>
</dbReference>
<dbReference type="SUPFAM" id="SSF54814">
    <property type="entry name" value="Prokaryotic type KH domain (KH-domain type II)"/>
    <property type="match status" value="1"/>
</dbReference>
<dbReference type="PROSITE" id="PS51713">
    <property type="entry name" value="G_ERA"/>
    <property type="match status" value="1"/>
</dbReference>
<dbReference type="PROSITE" id="PS50823">
    <property type="entry name" value="KH_TYPE_2"/>
    <property type="match status" value="1"/>
</dbReference>
<feature type="chain" id="PRO_1000121332" description="GTPase Era">
    <location>
        <begin position="1"/>
        <end position="301"/>
    </location>
</feature>
<feature type="domain" description="Era-type G" evidence="2">
    <location>
        <begin position="4"/>
        <end position="173"/>
    </location>
</feature>
<feature type="domain" description="KH type-2" evidence="1">
    <location>
        <begin position="204"/>
        <end position="280"/>
    </location>
</feature>
<feature type="region of interest" description="G1" evidence="2">
    <location>
        <begin position="12"/>
        <end position="19"/>
    </location>
</feature>
<feature type="region of interest" description="G2" evidence="2">
    <location>
        <begin position="38"/>
        <end position="42"/>
    </location>
</feature>
<feature type="region of interest" description="G3" evidence="2">
    <location>
        <begin position="64"/>
        <end position="67"/>
    </location>
</feature>
<feature type="region of interest" description="G4" evidence="2">
    <location>
        <begin position="122"/>
        <end position="125"/>
    </location>
</feature>
<feature type="region of interest" description="G5" evidence="2">
    <location>
        <begin position="152"/>
        <end position="154"/>
    </location>
</feature>
<feature type="binding site" evidence="1">
    <location>
        <begin position="12"/>
        <end position="19"/>
    </location>
    <ligand>
        <name>GTP</name>
        <dbReference type="ChEBI" id="CHEBI:37565"/>
    </ligand>
</feature>
<feature type="binding site" evidence="1">
    <location>
        <begin position="64"/>
        <end position="68"/>
    </location>
    <ligand>
        <name>GTP</name>
        <dbReference type="ChEBI" id="CHEBI:37565"/>
    </ligand>
</feature>
<feature type="binding site" evidence="1">
    <location>
        <begin position="122"/>
        <end position="125"/>
    </location>
    <ligand>
        <name>GTP</name>
        <dbReference type="ChEBI" id="CHEBI:37565"/>
    </ligand>
</feature>
<keyword id="KW-0997">Cell inner membrane</keyword>
<keyword id="KW-1003">Cell membrane</keyword>
<keyword id="KW-0963">Cytoplasm</keyword>
<keyword id="KW-0342">GTP-binding</keyword>
<keyword id="KW-0472">Membrane</keyword>
<keyword id="KW-0547">Nucleotide-binding</keyword>
<keyword id="KW-1185">Reference proteome</keyword>
<keyword id="KW-0690">Ribosome biogenesis</keyword>
<keyword id="KW-0694">RNA-binding</keyword>
<keyword id="KW-0699">rRNA-binding</keyword>
<organism>
    <name type="scientific">Helicobacter pylori (strain G27)</name>
    <dbReference type="NCBI Taxonomy" id="563041"/>
    <lineage>
        <taxon>Bacteria</taxon>
        <taxon>Pseudomonadati</taxon>
        <taxon>Campylobacterota</taxon>
        <taxon>Epsilonproteobacteria</taxon>
        <taxon>Campylobacterales</taxon>
        <taxon>Helicobacteraceae</taxon>
        <taxon>Helicobacter</taxon>
    </lineage>
</organism>
<evidence type="ECO:0000255" key="1">
    <source>
        <dbReference type="HAMAP-Rule" id="MF_00367"/>
    </source>
</evidence>
<evidence type="ECO:0000255" key="2">
    <source>
        <dbReference type="PROSITE-ProRule" id="PRU01050"/>
    </source>
</evidence>
<comment type="function">
    <text evidence="1">An essential GTPase that binds both GDP and GTP, with rapid nucleotide exchange. Plays a role in 16S rRNA processing and 30S ribosomal subunit biogenesis and possibly also in cell cycle regulation and energy metabolism.</text>
</comment>
<comment type="subunit">
    <text evidence="1">Monomer.</text>
</comment>
<comment type="subcellular location">
    <subcellularLocation>
        <location>Cytoplasm</location>
    </subcellularLocation>
    <subcellularLocation>
        <location evidence="1">Cell inner membrane</location>
        <topology evidence="1">Peripheral membrane protein</topology>
    </subcellularLocation>
</comment>
<comment type="similarity">
    <text evidence="1 2">Belongs to the TRAFAC class TrmE-Era-EngA-EngB-Septin-like GTPase superfamily. Era GTPase family.</text>
</comment>
<name>ERA_HELPG</name>
<gene>
    <name evidence="1" type="primary">era</name>
    <name type="ordered locus">HPG27_476</name>
</gene>
<proteinExistence type="inferred from homology"/>
<sequence length="301" mass="34528">MKTKAGFVALIGKPNAGKSTLLNTLLNAHLALVSHKANATRKLMKCIVPFKDKEGYESQIIFLDTPGLHHQEKLLNQCMLSQALKAMGDAELCVFLASVHDDLKGYEEFLNLCQKPHILALSKIDTATHKQVLQKLQEYQKYSSQFLDLVPLSAKKSQNLNTLLECISKYLSPSAWLFEKDLMSDEKMRDIYKEIIRESLFDFLSDEIPYESDVMIDKFIEEERIDKVYAHIIVEKESQKKIVIGKNGVNIKRIGTNARLKMQEVGEKKVFLNLQVIAQKSWSKEEKSLQKLGYIHQRKRD</sequence>
<reference key="1">
    <citation type="journal article" date="2009" name="J. Bacteriol.">
        <title>The complete genome sequence of Helicobacter pylori strain G27.</title>
        <authorList>
            <person name="Baltrus D.A."/>
            <person name="Amieva M.R."/>
            <person name="Covacci A."/>
            <person name="Lowe T.M."/>
            <person name="Merrell D.S."/>
            <person name="Ottemann K.M."/>
            <person name="Stein M."/>
            <person name="Salama N.R."/>
            <person name="Guillemin K."/>
        </authorList>
    </citation>
    <scope>NUCLEOTIDE SEQUENCE [LARGE SCALE GENOMIC DNA]</scope>
    <source>
        <strain>G27</strain>
    </source>
</reference>